<comment type="function">
    <text evidence="1">One of the essential components for the initiation of protein synthesis. Protects formylmethionyl-tRNA from spontaneous hydrolysis and promotes its binding to the 30S ribosomal subunits. Also involved in the hydrolysis of GTP during the formation of the 70S ribosomal complex (By similarity).</text>
</comment>
<comment type="subcellular location">
    <subcellularLocation>
        <location evidence="1">Cytoplasm</location>
    </subcellularLocation>
</comment>
<comment type="alternative products">
    <event type="alternative initiation"/>
    <isoform>
        <id>Q9ZF28-1</id>
        <name>Alpha</name>
        <sequence type="displayed"/>
    </isoform>
    <isoform>
        <id>Q9ZF28-2</id>
        <name>Beta</name>
        <sequence type="described" ref="VSP_018761 VSP_018762"/>
    </isoform>
    <isoform>
        <id>Q9ZF28-3</id>
        <name>Gamma</name>
        <sequence type="described" ref="VSP_018763"/>
    </isoform>
</comment>
<comment type="similarity">
    <text evidence="3">Belongs to the TRAFAC class translation factor GTPase superfamily. Classic translation factor GTPase family. IF-2 subfamily.</text>
</comment>
<sequence>MTDVTIKALASEIQTSVDRLIQQFADAGIRKSADDSVTAQEKQTLLTHLNREHGSAPDKLTLQRKTRSTLNIPGTGGKSKSVQIEVRKKRTFVKRDPQEAERLAAEEQAQREAEEQARREAEEAAKREAQLKAEREAAEQAKRELADKAKREAAEKDKVSNQQTDDMTKTAQAEKQRRENEAAELKRKSEEEARRKLEEEARRVAEEARRMAQENEKNWTEAPETPEETTDYHVTTSQHARQAEDDNDREVEGGRGRGRNAKAARPAKKGNKHAESKADREEARAAVRGGKGGKHRKGSALQQGFQKPAQAVNRDVIIGETITVGDLANKMAVKGSQVIKAMMKLGAMATINQVIDQETAQLVAEEMGHKVILRRENELEEAVMSDRDTGAAAEPRAPVVTIMGHVDHGKTSLLDYIRSTKVASGEAGGITQHIGAYHVETDNGMITFLDTPGHAAFTSMRARGAQATDIVVLVVAADDGVMPQTIEAIQHAKAAQVPLVVAVNKIDKPEADLDRVKNELSQYGVMPEEWGGEAQFIPVSAKAGTGIDDLLNAILLQAEVLELKAVRNGMASGAVIESFLDKGRGPVATVLVREGTLHKGDIVLCGFEYGRVRAMRNELGQEVLEAGPSIPVEILGLSGVPAAGDEVTVVRDEKKAREVALYRQGKFREVKLARQQKSKLENMFANMTEGEVHEVNIVLKADVQGSVEAISDSLLKLSTDEVKVKIIGSGVGGITETDATLAAASNAILVGFNVRADASARKVIDAESLDLRYYSVIYHLIDEVKAAMSGMLSPELKQQIIGLAEVRDVFKSPKFGAIAGCMVTEGTIKRHNPIRVLRDNVVIYEGELESLRRFKDDVNEVRNGMECGIGVKNYNDVRVGDMIEVFEIIEIQRTID</sequence>
<reference key="1">
    <citation type="submission" date="1997-11" db="EMBL/GenBank/DDBJ databases">
        <title>Sequence of the infB gene from Klebsiella oxytoca.</title>
        <authorList>
            <person name="Steffensen S.A.D.A."/>
            <person name="Poulsen A.B."/>
            <person name="Fage-Larsen J."/>
            <person name="Korsager B."/>
            <person name="Mortensen K.K."/>
            <person name="Sperling-Petersen H.U."/>
        </authorList>
    </citation>
    <scope>NUCLEOTIDE SEQUENCE [GENOMIC DNA]</scope>
    <source>
        <strain>KoxAU9501</strain>
    </source>
</reference>
<name>IF2_KLEOX</name>
<feature type="chain" id="PRO_0000014469" description="Translation initiation factor IF-2">
    <location>
        <begin position="1"/>
        <end position="896"/>
    </location>
</feature>
<feature type="domain" description="tr-type G">
    <location>
        <begin position="395"/>
        <end position="564"/>
    </location>
</feature>
<feature type="region of interest" description="Disordered" evidence="2">
    <location>
        <begin position="94"/>
        <end position="307"/>
    </location>
</feature>
<feature type="region of interest" description="G1" evidence="1">
    <location>
        <begin position="404"/>
        <end position="411"/>
    </location>
</feature>
<feature type="region of interest" description="G2" evidence="1">
    <location>
        <begin position="429"/>
        <end position="433"/>
    </location>
</feature>
<feature type="region of interest" description="G3" evidence="1">
    <location>
        <begin position="450"/>
        <end position="453"/>
    </location>
</feature>
<feature type="region of interest" description="G4" evidence="1">
    <location>
        <begin position="504"/>
        <end position="507"/>
    </location>
</feature>
<feature type="region of interest" description="G5" evidence="1">
    <location>
        <begin position="540"/>
        <end position="542"/>
    </location>
</feature>
<feature type="compositionally biased region" description="Basic and acidic residues" evidence="2">
    <location>
        <begin position="94"/>
        <end position="159"/>
    </location>
</feature>
<feature type="compositionally biased region" description="Basic and acidic residues" evidence="2">
    <location>
        <begin position="166"/>
        <end position="219"/>
    </location>
</feature>
<feature type="compositionally biased region" description="Basic residues" evidence="2">
    <location>
        <begin position="256"/>
        <end position="271"/>
    </location>
</feature>
<feature type="compositionally biased region" description="Basic and acidic residues" evidence="2">
    <location>
        <begin position="272"/>
        <end position="285"/>
    </location>
</feature>
<feature type="binding site" evidence="1">
    <location>
        <begin position="404"/>
        <end position="411"/>
    </location>
    <ligand>
        <name>GTP</name>
        <dbReference type="ChEBI" id="CHEBI:37565"/>
    </ligand>
</feature>
<feature type="binding site" evidence="1">
    <location>
        <begin position="450"/>
        <end position="454"/>
    </location>
    <ligand>
        <name>GTP</name>
        <dbReference type="ChEBI" id="CHEBI:37565"/>
    </ligand>
</feature>
<feature type="binding site" evidence="1">
    <location>
        <begin position="504"/>
        <end position="507"/>
    </location>
    <ligand>
        <name>GTP</name>
        <dbReference type="ChEBI" id="CHEBI:37565"/>
    </ligand>
</feature>
<feature type="splice variant" id="VSP_018763" description="In isoform Gamma." evidence="3">
    <location>
        <begin position="1"/>
        <end position="166"/>
    </location>
</feature>
<feature type="splice variant" id="VSP_018761" description="In isoform Beta." evidence="3">
    <location>
        <begin position="1"/>
        <end position="158"/>
    </location>
</feature>
<feature type="splice variant" id="VSP_018762" description="In isoform Beta." evidence="3">
    <original>V</original>
    <variation>M</variation>
    <location>
        <position position="159"/>
    </location>
</feature>
<keyword id="KW-0024">Alternative initiation</keyword>
<keyword id="KW-0963">Cytoplasm</keyword>
<keyword id="KW-0342">GTP-binding</keyword>
<keyword id="KW-0396">Initiation factor</keyword>
<keyword id="KW-0547">Nucleotide-binding</keyword>
<keyword id="KW-0648">Protein biosynthesis</keyword>
<evidence type="ECO:0000250" key="1"/>
<evidence type="ECO:0000256" key="2">
    <source>
        <dbReference type="SAM" id="MobiDB-lite"/>
    </source>
</evidence>
<evidence type="ECO:0000305" key="3"/>
<proteinExistence type="inferred from homology"/>
<dbReference type="EMBL" id="AJ002735">
    <property type="protein sequence ID" value="CAA05698.1"/>
    <property type="molecule type" value="Genomic_DNA"/>
</dbReference>
<dbReference type="EMBL" id="AJ002735">
    <property type="protein sequence ID" value="CAA05699.1"/>
    <property type="molecule type" value="Genomic_DNA"/>
</dbReference>
<dbReference type="EMBL" id="AJ002735">
    <property type="protein sequence ID" value="CAA05700.1"/>
    <property type="molecule type" value="Genomic_DNA"/>
</dbReference>
<dbReference type="SMR" id="Q9ZF28"/>
<dbReference type="STRING" id="571.AB185_10150"/>
<dbReference type="KEGG" id="koc:AB185_10150"/>
<dbReference type="eggNOG" id="COG0532">
    <property type="taxonomic scope" value="Bacteria"/>
</dbReference>
<dbReference type="OrthoDB" id="9811804at2"/>
<dbReference type="GO" id="GO:0005829">
    <property type="term" value="C:cytosol"/>
    <property type="evidence" value="ECO:0007669"/>
    <property type="project" value="TreeGrafter"/>
</dbReference>
<dbReference type="GO" id="GO:0005525">
    <property type="term" value="F:GTP binding"/>
    <property type="evidence" value="ECO:0007669"/>
    <property type="project" value="UniProtKB-KW"/>
</dbReference>
<dbReference type="GO" id="GO:0003924">
    <property type="term" value="F:GTPase activity"/>
    <property type="evidence" value="ECO:0007669"/>
    <property type="project" value="UniProtKB-UniRule"/>
</dbReference>
<dbReference type="GO" id="GO:0097216">
    <property type="term" value="F:guanosine tetraphosphate binding"/>
    <property type="evidence" value="ECO:0007669"/>
    <property type="project" value="UniProtKB-ARBA"/>
</dbReference>
<dbReference type="GO" id="GO:0003743">
    <property type="term" value="F:translation initiation factor activity"/>
    <property type="evidence" value="ECO:0007669"/>
    <property type="project" value="UniProtKB-UniRule"/>
</dbReference>
<dbReference type="CDD" id="cd01887">
    <property type="entry name" value="IF2_eIF5B"/>
    <property type="match status" value="1"/>
</dbReference>
<dbReference type="CDD" id="cd03702">
    <property type="entry name" value="IF2_mtIF2_II"/>
    <property type="match status" value="1"/>
</dbReference>
<dbReference type="CDD" id="cd03692">
    <property type="entry name" value="mtIF2_IVc"/>
    <property type="match status" value="1"/>
</dbReference>
<dbReference type="FunFam" id="2.40.30.10:FF:000007">
    <property type="entry name" value="Translation initiation factor IF-2"/>
    <property type="match status" value="1"/>
</dbReference>
<dbReference type="FunFam" id="2.40.30.10:FF:000008">
    <property type="entry name" value="Translation initiation factor IF-2"/>
    <property type="match status" value="1"/>
</dbReference>
<dbReference type="FunFam" id="3.30.56.50:FF:000001">
    <property type="entry name" value="Translation initiation factor IF-2"/>
    <property type="match status" value="1"/>
</dbReference>
<dbReference type="FunFam" id="3.40.50.10050:FF:000001">
    <property type="entry name" value="Translation initiation factor IF-2"/>
    <property type="match status" value="1"/>
</dbReference>
<dbReference type="FunFam" id="3.40.50.300:FF:000019">
    <property type="entry name" value="Translation initiation factor IF-2"/>
    <property type="match status" value="1"/>
</dbReference>
<dbReference type="Gene3D" id="3.40.50.300">
    <property type="entry name" value="P-loop containing nucleotide triphosphate hydrolases"/>
    <property type="match status" value="1"/>
</dbReference>
<dbReference type="Gene3D" id="3.30.56.50">
    <property type="entry name" value="Putative DNA-binding domain, N-terminal subdomain of bacterial translation initiation factor IF2"/>
    <property type="match status" value="1"/>
</dbReference>
<dbReference type="Gene3D" id="2.40.30.10">
    <property type="entry name" value="Translation factors"/>
    <property type="match status" value="2"/>
</dbReference>
<dbReference type="Gene3D" id="3.40.50.10050">
    <property type="entry name" value="Translation initiation factor IF- 2, domain 3"/>
    <property type="match status" value="1"/>
</dbReference>
<dbReference type="HAMAP" id="MF_00100_B">
    <property type="entry name" value="IF_2_B"/>
    <property type="match status" value="1"/>
</dbReference>
<dbReference type="InterPro" id="IPR009061">
    <property type="entry name" value="DNA-bd_dom_put_sf"/>
</dbReference>
<dbReference type="InterPro" id="IPR053905">
    <property type="entry name" value="EF-G-like_DII"/>
</dbReference>
<dbReference type="InterPro" id="IPR004161">
    <property type="entry name" value="EFTu-like_2"/>
</dbReference>
<dbReference type="InterPro" id="IPR013575">
    <property type="entry name" value="IF2_assoc_dom_bac"/>
</dbReference>
<dbReference type="InterPro" id="IPR044145">
    <property type="entry name" value="IF2_II"/>
</dbReference>
<dbReference type="InterPro" id="IPR006847">
    <property type="entry name" value="IF2_N"/>
</dbReference>
<dbReference type="InterPro" id="IPR027417">
    <property type="entry name" value="P-loop_NTPase"/>
</dbReference>
<dbReference type="InterPro" id="IPR005225">
    <property type="entry name" value="Small_GTP-bd"/>
</dbReference>
<dbReference type="InterPro" id="IPR000795">
    <property type="entry name" value="T_Tr_GTP-bd_dom"/>
</dbReference>
<dbReference type="InterPro" id="IPR000178">
    <property type="entry name" value="TF_IF2_bacterial-like"/>
</dbReference>
<dbReference type="InterPro" id="IPR015760">
    <property type="entry name" value="TIF_IF2"/>
</dbReference>
<dbReference type="InterPro" id="IPR023115">
    <property type="entry name" value="TIF_IF2_dom3"/>
</dbReference>
<dbReference type="InterPro" id="IPR036925">
    <property type="entry name" value="TIF_IF2_dom3_sf"/>
</dbReference>
<dbReference type="InterPro" id="IPR009000">
    <property type="entry name" value="Transl_B-barrel_sf"/>
</dbReference>
<dbReference type="NCBIfam" id="TIGR00487">
    <property type="entry name" value="IF-2"/>
    <property type="match status" value="1"/>
</dbReference>
<dbReference type="NCBIfam" id="TIGR00231">
    <property type="entry name" value="small_GTP"/>
    <property type="match status" value="1"/>
</dbReference>
<dbReference type="PANTHER" id="PTHR43381:SF5">
    <property type="entry name" value="TR-TYPE G DOMAIN-CONTAINING PROTEIN"/>
    <property type="match status" value="1"/>
</dbReference>
<dbReference type="PANTHER" id="PTHR43381">
    <property type="entry name" value="TRANSLATION INITIATION FACTOR IF-2-RELATED"/>
    <property type="match status" value="1"/>
</dbReference>
<dbReference type="Pfam" id="PF22042">
    <property type="entry name" value="EF-G_D2"/>
    <property type="match status" value="1"/>
</dbReference>
<dbReference type="Pfam" id="PF00009">
    <property type="entry name" value="GTP_EFTU"/>
    <property type="match status" value="1"/>
</dbReference>
<dbReference type="Pfam" id="PF03144">
    <property type="entry name" value="GTP_EFTU_D2"/>
    <property type="match status" value="1"/>
</dbReference>
<dbReference type="Pfam" id="PF11987">
    <property type="entry name" value="IF-2"/>
    <property type="match status" value="1"/>
</dbReference>
<dbReference type="Pfam" id="PF08364">
    <property type="entry name" value="IF2_assoc"/>
    <property type="match status" value="1"/>
</dbReference>
<dbReference type="Pfam" id="PF04760">
    <property type="entry name" value="IF2_N"/>
    <property type="match status" value="2"/>
</dbReference>
<dbReference type="SUPFAM" id="SSF52156">
    <property type="entry name" value="Initiation factor IF2/eIF5b, domain 3"/>
    <property type="match status" value="1"/>
</dbReference>
<dbReference type="SUPFAM" id="SSF52540">
    <property type="entry name" value="P-loop containing nucleoside triphosphate hydrolases"/>
    <property type="match status" value="1"/>
</dbReference>
<dbReference type="SUPFAM" id="SSF46955">
    <property type="entry name" value="Putative DNA-binding domain"/>
    <property type="match status" value="1"/>
</dbReference>
<dbReference type="SUPFAM" id="SSF50447">
    <property type="entry name" value="Translation proteins"/>
    <property type="match status" value="2"/>
</dbReference>
<dbReference type="PROSITE" id="PS51722">
    <property type="entry name" value="G_TR_2"/>
    <property type="match status" value="1"/>
</dbReference>
<dbReference type="PROSITE" id="PS01176">
    <property type="entry name" value="IF2"/>
    <property type="match status" value="1"/>
</dbReference>
<gene>
    <name type="primary">infB</name>
</gene>
<protein>
    <recommendedName>
        <fullName>Translation initiation factor IF-2</fullName>
    </recommendedName>
</protein>
<accession>Q9ZF28</accession>
<organism>
    <name type="scientific">Klebsiella oxytoca</name>
    <dbReference type="NCBI Taxonomy" id="571"/>
    <lineage>
        <taxon>Bacteria</taxon>
        <taxon>Pseudomonadati</taxon>
        <taxon>Pseudomonadota</taxon>
        <taxon>Gammaproteobacteria</taxon>
        <taxon>Enterobacterales</taxon>
        <taxon>Enterobacteriaceae</taxon>
        <taxon>Klebsiella/Raoultella group</taxon>
        <taxon>Klebsiella</taxon>
    </lineage>
</organism>